<protein>
    <recommendedName>
        <fullName>Putative replication origin-binding protein</fullName>
        <shortName>OBP</shortName>
        <ecNumber>3.6.4.-</ecNumber>
    </recommendedName>
</protein>
<proteinExistence type="inferred from homology"/>
<name>YR001_MIMIV</name>
<reference key="1">
    <citation type="journal article" date="2004" name="Science">
        <title>The 1.2-megabase genome sequence of Mimivirus.</title>
        <authorList>
            <person name="Raoult D."/>
            <person name="Audic S."/>
            <person name="Robert C."/>
            <person name="Abergel C."/>
            <person name="Renesto P."/>
            <person name="Ogata H."/>
            <person name="La Scola B."/>
            <person name="Susan M."/>
            <person name="Claverie J.-M."/>
        </authorList>
    </citation>
    <scope>NUCLEOTIDE SEQUENCE [LARGE SCALE GENOMIC DNA]</scope>
    <source>
        <strain>Rowbotham-Bradford</strain>
    </source>
</reference>
<feature type="chain" id="PRO_0000253219" description="Putative replication origin-binding protein">
    <location>
        <begin position="1"/>
        <end position="795"/>
    </location>
</feature>
<feature type="domain" description="Helicase ATP-binding">
    <location>
        <begin position="121"/>
        <end position="289"/>
    </location>
</feature>
<feature type="binding site" evidence="1">
    <location>
        <begin position="134"/>
        <end position="141"/>
    </location>
    <ligand>
        <name>ATP</name>
        <dbReference type="ChEBI" id="CHEBI:30616"/>
    </ligand>
</feature>
<gene>
    <name type="ordered locus">MIMI_R1</name>
</gene>
<organismHost>
    <name type="scientific">Acanthamoeba polyphaga</name>
    <name type="common">Amoeba</name>
    <dbReference type="NCBI Taxonomy" id="5757"/>
</organismHost>
<dbReference type="EC" id="3.6.4.-"/>
<dbReference type="EMBL" id="AY653733">
    <property type="protein sequence ID" value="AAV50276.1"/>
    <property type="molecule type" value="Genomic_DNA"/>
</dbReference>
<dbReference type="SMR" id="Q5UP78"/>
<dbReference type="KEGG" id="vg:9925578"/>
<dbReference type="OrthoDB" id="746at10239"/>
<dbReference type="Proteomes" id="UP000001134">
    <property type="component" value="Genome"/>
</dbReference>
<dbReference type="GO" id="GO:0005524">
    <property type="term" value="F:ATP binding"/>
    <property type="evidence" value="ECO:0007669"/>
    <property type="project" value="UniProtKB-KW"/>
</dbReference>
<dbReference type="GO" id="GO:0003688">
    <property type="term" value="F:DNA replication origin binding"/>
    <property type="evidence" value="ECO:0007669"/>
    <property type="project" value="InterPro"/>
</dbReference>
<dbReference type="GO" id="GO:0004386">
    <property type="term" value="F:helicase activity"/>
    <property type="evidence" value="ECO:0007669"/>
    <property type="project" value="UniProtKB-KW"/>
</dbReference>
<dbReference type="GO" id="GO:0016787">
    <property type="term" value="F:hydrolase activity"/>
    <property type="evidence" value="ECO:0007669"/>
    <property type="project" value="UniProtKB-KW"/>
</dbReference>
<dbReference type="GO" id="GO:0006260">
    <property type="term" value="P:DNA replication"/>
    <property type="evidence" value="ECO:0007669"/>
    <property type="project" value="InterPro"/>
</dbReference>
<dbReference type="Gene3D" id="3.40.50.300">
    <property type="entry name" value="P-loop containing nucleotide triphosphate hydrolases"/>
    <property type="match status" value="1"/>
</dbReference>
<dbReference type="InterPro" id="IPR027417">
    <property type="entry name" value="P-loop_NTPase"/>
</dbReference>
<dbReference type="InterPro" id="IPR003450">
    <property type="entry name" value="Replication_origin-bd"/>
</dbReference>
<dbReference type="Pfam" id="PF02399">
    <property type="entry name" value="Herpes_ori_bp"/>
    <property type="match status" value="2"/>
</dbReference>
<dbReference type="SUPFAM" id="SSF52540">
    <property type="entry name" value="P-loop containing nucleoside triphosphate hydrolases"/>
    <property type="match status" value="1"/>
</dbReference>
<accession>Q5UP78</accession>
<comment type="function">
    <text evidence="1">Probably involved in DNA replication. May bind the genome origin of replication (ori) (By similarity).</text>
</comment>
<comment type="similarity">
    <text evidence="2">Belongs to the mimivirus R1 family.</text>
</comment>
<organism>
    <name type="scientific">Acanthamoeba polyphaga mimivirus</name>
    <name type="common">APMV</name>
    <dbReference type="NCBI Taxonomy" id="212035"/>
    <lineage>
        <taxon>Viruses</taxon>
        <taxon>Varidnaviria</taxon>
        <taxon>Bamfordvirae</taxon>
        <taxon>Nucleocytoviricota</taxon>
        <taxon>Megaviricetes</taxon>
        <taxon>Imitervirales</taxon>
        <taxon>Mimiviridae</taxon>
        <taxon>Megamimivirinae</taxon>
        <taxon>Mimivirus</taxon>
        <taxon>Mimivirus bradfordmassiliense</taxon>
    </lineage>
</organism>
<sequence>MTYVKKYHPTTKYYGIIHGEKYELQDVLFYSFNYSNREEVCPISGTAHKSNGFYVIETSKGYFMKCHSDKCKNKKAKYLGPADATDMFVKCANQIDQQYLIMKGGIADAPKEPVKDIIINWLSNDKIKTLAVRSPMGTGKTTMIKKILDHYDNIKKILWISHRQTLSKQIYGSFKNHGFVNYMDQKGNLFEHDRLIIQIDSLKRIFKYDKDYNTVFKQYDLVIIDEIEGNMNHFMSPYLRKDSDFSVRQTFQKMLNCIDTAKKLLVLDADLGMRSKLFIDNFGKSIVVNNNYKPIQKIFEITNDLSSFQEILLADIKDGKNVCVVSMSASYLDKLEPKFAGLKYVIHTSKSDDKLKNELENVNYFWKKFQICCFSPTIECGVDFNEKHFDKIYCYLKNGSKTCSQRSLLQMVGRIRQLGNNKILCYYSGPTNIDADIYTYDDILGYFRHYEKINGRKVLENVEYKKFIANGEVTLKRVSANISLFDHIHIYNEVEESNKNHSMFITVLFKLIQRAGHSMIFNTVEEPEEVEPDNNVISHAEILSMINETKYKISDLMKKQSKNQLSRTEKLVLEKYFFMKNFGVKDSSNKDEFVKFHKKYANKEITFKHFKRFFGYDNPNNSIDELKHLDIFVSNKKPPNNNNNNFLDEHNDSKDAVRDKIIVNFLNLILDVKKNGYGPDDLGYTLTQDEHNTAVLTVAEQSMYFANEDKYRPLFNKNKGKFKEINEYNFKHYFKTVKAILQSYGIDYYRGNRKRVNSRREFEYSLSVDKQIRDIVDFKFGLSDTVDEFPNLFHK</sequence>
<evidence type="ECO:0000250" key="1"/>
<evidence type="ECO:0000305" key="2"/>
<keyword id="KW-0067">ATP-binding</keyword>
<keyword id="KW-0347">Helicase</keyword>
<keyword id="KW-0378">Hydrolase</keyword>
<keyword id="KW-0547">Nucleotide-binding</keyword>
<keyword id="KW-1185">Reference proteome</keyword>